<protein>
    <recommendedName>
        <fullName evidence="3 6">Conotoxin Bt1.8</fullName>
    </recommendedName>
</protein>
<comment type="function">
    <text evidence="2">Alpha-conotoxins bind to the nicotinic acetylcholine receptors (nAChR) and inhibit them. This toxin inhibits mammalian alpha-3-beta-2/CHRNA3-CHRNB2 nAChR (IC(50)=9.4 nM (rat), IC(50)=8.8 nM (human)), as well as the subunit chimera alpha-6/alpha-3-beta-2-beta-3 nAChR (CHRNA6/CHRNA3-CHRNB2-CHRNB3)(IC(50)=2.1 nM (rat), IC(50)=1.7 nM (human)). Binds to rat alpha-6/alpha-3-beta-2-beta-3 more rapidly than to alpha-3-beta-2, and dissociates more rapidly from alpha-3-beta-2 than from alpha-6/alpha-3-beta-2-beta-3.</text>
</comment>
<comment type="subcellular location">
    <subcellularLocation>
        <location evidence="5">Secreted</location>
    </subcellularLocation>
</comment>
<comment type="tissue specificity">
    <text evidence="5">Expressed by the venom duct.</text>
</comment>
<comment type="domain">
    <text evidence="5">The cysteine framework is I (CC-C-C). Alpha4/7 pattern.</text>
</comment>
<comment type="miscellaneous">
    <text evidence="2">Negative results: shows low or no activity on rat alpha-3-beta-4 (IC(50)=2.15 uM), alpha-2-beta-2 (&gt;10 uM), alpha-2-beta-4 (&gt;10 uM), alpha-4-beta-2 (&gt;10 uM), alpha-4-beta-4 (&gt;10 uM), alpha-7 (&gt;10 uM), and alpha-9-alpha-10 (&gt;10 uM), as well as on rat subunit chimera alpha-6/alpha-3-beta-4 (IC(50)&gt;100 nM), rat alpha-6/alpha3-alpha-4-beta-2 (IC(50)&gt;3 uM).</text>
</comment>
<comment type="similarity">
    <text evidence="5">Belongs to the conotoxin A superfamily.</text>
</comment>
<feature type="propeptide" id="PRO_0000448284" evidence="1">
    <location>
        <begin position="1" status="less than"/>
        <end position="20"/>
    </location>
</feature>
<feature type="peptide" id="PRO_0000448285" description="Conotoxin Bt1.8" evidence="1">
    <location>
        <begin position="21"/>
        <end position="36"/>
    </location>
</feature>
<feature type="site" description="Important for binding to nAChR" evidence="2">
    <location>
        <position position="29"/>
    </location>
</feature>
<feature type="site" description="Moderately important for binding to nAChR" evidence="2">
    <location>
        <position position="30"/>
    </location>
</feature>
<feature type="site" description="Important for binding to nAChR" evidence="2">
    <location>
        <position position="31"/>
    </location>
</feature>
<feature type="site" description="Important for binding to nAChR" evidence="2">
    <location>
        <position position="32"/>
    </location>
</feature>
<feature type="site" description="Moderately Important for binding to nAChR" evidence="2">
    <location>
        <position position="34"/>
    </location>
</feature>
<feature type="site" description="Moderately important for binding to nAChR" evidence="2">
    <location>
        <position position="35"/>
    </location>
</feature>
<feature type="modified residue" description="Cysteine amide" evidence="1">
    <location>
        <position position="36"/>
    </location>
</feature>
<feature type="disulfide bond" evidence="2 7">
    <location>
        <begin position="22"/>
        <end position="28"/>
    </location>
</feature>
<feature type="disulfide bond" evidence="2 7">
    <location>
        <begin position="23"/>
        <end position="36"/>
    </location>
</feature>
<feature type="mutagenesis site" description="No change in ability to inhibit alpha-3-beta-2 nAChR, decrease in ability to inhibit alpha-6/alpha-3-beta-2-beta-3 nAChR, 2-fold increase in ability to inhibit alpha-3-beta-4 nAChR." evidence="2">
    <original>N</original>
    <variation>H</variation>
    <location>
        <position position="25"/>
    </location>
</feature>
<feature type="mutagenesis site" description="8-fold increase in ability to inhibit alpha-3-beta-2 nAChR, important decrease in ability to inhibit alpha-6/alpha-3-beta-2-beta-3 nAChR, and loss of ability to inhibit alpha-3-beta-4 nAChR." evidence="2">
    <original>I</original>
    <variation>A</variation>
    <location>
        <position position="29"/>
    </location>
</feature>
<feature type="mutagenesis site" description="8-fold decrease in ability to inhibit alpha-3-beta-2 nAChR, decrease in ability to inhibit alpha-6/alpha-3-beta-2-beta-3 nAChR, and loss of ability to inhibit alpha-3-beta-4 nAChR." evidence="2">
    <original>L</original>
    <variation>A</variation>
    <location>
        <position position="30"/>
    </location>
</feature>
<feature type="mutagenesis site" description="Loss of ability to inhibit alpha-3-beta-2 nAChR, important decrease in ability to inhibit alpha-6/alpha-3-beta-2-beta-3 nAChR, and loss of ability to inhibit alpha-3-beta-4 nAChR." evidence="2">
    <original>N</original>
    <variation>A</variation>
    <location>
        <position position="31"/>
    </location>
</feature>
<feature type="mutagenesis site" description="3-fold increase in ability to inhibit alpha-3-beta-2 nAChR, important decrease in ability to inhibit alpha-6/alpha-3-beta-2-beta-3 nAChR, and loss of ability to inhibit alpha-3-beta-4 nAChR." evidence="2">
    <original>N</original>
    <variation>E</variation>
    <location>
        <position position="31"/>
    </location>
</feature>
<feature type="mutagenesis site" description="Loss of ability to inhibit alpha-3-beta-2 nAChR, important decrease in ability to inhibit alpha-6/alpha-3-beta-2-beta-3 nAChR, and loss of ability to inhibit alpha-3-beta-4 nAChR." evidence="2">
    <original>N</original>
    <variation>A</variation>
    <location>
        <position position="32"/>
    </location>
</feature>
<feature type="mutagenesis site" description="5-fold decrease in ability to inhibit alpha-3-beta-2 nAChR, decrease in ability to inhibit alpha-6/alpha-3-beta-2-beta-3 nAChR, and loss of ability to inhibit alpha-3-beta-4 nAChR." evidence="2">
    <original>N</original>
    <variation>A</variation>
    <location>
        <position position="34"/>
    </location>
</feature>
<feature type="mutagenesis site" description="6-fold decrease in ability to inhibit alpha-3-beta-2 nAChR, decrease in ability to inhibit alpha-6/alpha-3-beta-2-beta-3 nAChR, and loss of ability to inhibit alpha-3-beta-4 nAChR." evidence="2">
    <original>Q</original>
    <variation>A</variation>
    <location>
        <position position="35"/>
    </location>
</feature>
<feature type="non-terminal residue" evidence="4">
    <location>
        <position position="1"/>
    </location>
</feature>
<feature type="strand" evidence="8">
    <location>
        <begin position="23"/>
        <end position="26"/>
    </location>
</feature>
<feature type="helix" evidence="8">
    <location>
        <begin position="28"/>
        <end position="31"/>
    </location>
</feature>
<proteinExistence type="evidence at protein level"/>
<sequence>PDGRNAAAKAFDLITPTVRKGCCSNPACILNNPNQCG</sequence>
<organism>
    <name type="scientific">Conus betulinus</name>
    <name type="common">Beech cone</name>
    <dbReference type="NCBI Taxonomy" id="89764"/>
    <lineage>
        <taxon>Eukaryota</taxon>
        <taxon>Metazoa</taxon>
        <taxon>Spiralia</taxon>
        <taxon>Lophotrochozoa</taxon>
        <taxon>Mollusca</taxon>
        <taxon>Gastropoda</taxon>
        <taxon>Caenogastropoda</taxon>
        <taxon>Neogastropoda</taxon>
        <taxon>Conoidea</taxon>
        <taxon>Conidae</taxon>
        <taxon>Conus</taxon>
        <taxon>Dendroconus</taxon>
    </lineage>
</organism>
<reference evidence="6" key="1">
    <citation type="submission" date="2013-07" db="EMBL/GenBank/DDBJ databases">
        <authorList>
            <person name="Zhang L.X."/>
            <person name="Liu Z.G."/>
            <person name="Dai Q.Y."/>
        </authorList>
    </citation>
    <scope>NUCLEOTIDE SEQUENCE [GENOMIC DNA]</scope>
    <source>
        <tissue>Venom gland</tissue>
    </source>
</reference>
<reference evidence="7" key="2">
    <citation type="journal article" date="2021" name="J. Neurochem.">
        <title>Alpha-conotoxin Bt1.8 from Conus betulinus selectively inhibits alpha6/alpha3beta2beta3 and alpha3beta2 nicotinic acetylcholine receptor subtypes.</title>
        <authorList>
            <person name="Ning H."/>
            <person name="Huang B."/>
            <person name="Tae H.S."/>
            <person name="Liu Z."/>
            <person name="Yu S."/>
            <person name="Li L."/>
            <person name="Zhang L."/>
            <person name="Adams D.J."/>
            <person name="Guo C."/>
            <person name="Dai Q."/>
        </authorList>
    </citation>
    <scope>STRUCTURE BY NMR OF 21-36</scope>
    <scope>SYNTHESIS OF 21-36</scope>
    <scope>DISULFIDE BONDS</scope>
    <scope>MUTAGENESIS OF ASN-25; ILE-29; LEU-30; ASN-31; ASN-32; ASN-34 AND GLN-35</scope>
</reference>
<name>CA18_CONBE</name>
<keyword id="KW-0002">3D-structure</keyword>
<keyword id="KW-0008">Acetylcholine receptor inhibiting toxin</keyword>
<keyword id="KW-0027">Amidation</keyword>
<keyword id="KW-0165">Cleavage on pair of basic residues</keyword>
<keyword id="KW-1015">Disulfide bond</keyword>
<keyword id="KW-0872">Ion channel impairing toxin</keyword>
<keyword id="KW-0528">Neurotoxin</keyword>
<keyword id="KW-0629">Postsynaptic neurotoxin</keyword>
<keyword id="KW-0964">Secreted</keyword>
<keyword id="KW-0800">Toxin</keyword>
<accession>A0A068B6Q6</accession>
<evidence type="ECO:0000250" key="1">
    <source>
        <dbReference type="UniProtKB" id="Q86RB2"/>
    </source>
</evidence>
<evidence type="ECO:0000269" key="2">
    <source>
    </source>
</evidence>
<evidence type="ECO:0000303" key="3">
    <source>
    </source>
</evidence>
<evidence type="ECO:0000303" key="4">
    <source ref="1"/>
</evidence>
<evidence type="ECO:0000305" key="5"/>
<evidence type="ECO:0000312" key="6">
    <source>
        <dbReference type="EMBL" id="AIC77077.1"/>
    </source>
</evidence>
<evidence type="ECO:0007744" key="7">
    <source>
        <dbReference type="PDB" id="2NAY"/>
    </source>
</evidence>
<evidence type="ECO:0007829" key="8">
    <source>
        <dbReference type="PDB" id="2NAY"/>
    </source>
</evidence>
<dbReference type="EMBL" id="KF414094">
    <property type="protein sequence ID" value="AIC77077.1"/>
    <property type="molecule type" value="Genomic_DNA"/>
</dbReference>
<dbReference type="PDB" id="2NAY">
    <property type="method" value="NMR"/>
    <property type="chains" value="A=21-36"/>
</dbReference>
<dbReference type="PDBsum" id="2NAY"/>
<dbReference type="BMRB" id="A0A068B6Q6"/>
<dbReference type="SMR" id="A0A068B6Q6"/>
<dbReference type="GO" id="GO:0005576">
    <property type="term" value="C:extracellular region"/>
    <property type="evidence" value="ECO:0007669"/>
    <property type="project" value="UniProtKB-SubCell"/>
</dbReference>
<dbReference type="GO" id="GO:0035792">
    <property type="term" value="C:host cell postsynaptic membrane"/>
    <property type="evidence" value="ECO:0007669"/>
    <property type="project" value="UniProtKB-KW"/>
</dbReference>
<dbReference type="GO" id="GO:0030550">
    <property type="term" value="F:acetylcholine receptor inhibitor activity"/>
    <property type="evidence" value="ECO:0007669"/>
    <property type="project" value="UniProtKB-KW"/>
</dbReference>
<dbReference type="GO" id="GO:0099106">
    <property type="term" value="F:ion channel regulator activity"/>
    <property type="evidence" value="ECO:0007669"/>
    <property type="project" value="UniProtKB-KW"/>
</dbReference>
<dbReference type="GO" id="GO:0090729">
    <property type="term" value="F:toxin activity"/>
    <property type="evidence" value="ECO:0007669"/>
    <property type="project" value="UniProtKB-KW"/>
</dbReference>
<dbReference type="InterPro" id="IPR009958">
    <property type="entry name" value="Conotoxin_a-typ"/>
</dbReference>
<dbReference type="Pfam" id="PF07365">
    <property type="entry name" value="Toxin_8"/>
    <property type="match status" value="1"/>
</dbReference>